<keyword id="KW-0025">Alternative splicing</keyword>
<keyword id="KW-0472">Membrane</keyword>
<keyword id="KW-1185">Reference proteome</keyword>
<keyword id="KW-0812">Transmembrane</keyword>
<keyword id="KW-1133">Transmembrane helix</keyword>
<evidence type="ECO:0000255" key="1"/>
<evidence type="ECO:0000305" key="2"/>
<protein>
    <recommendedName>
        <fullName>Protein cornichon homolog 3</fullName>
    </recommendedName>
</protein>
<reference key="1">
    <citation type="journal article" date="2000" name="Nature">
        <title>Sequence and analysis of chromosome 1 of the plant Arabidopsis thaliana.</title>
        <authorList>
            <person name="Theologis A."/>
            <person name="Ecker J.R."/>
            <person name="Palm C.J."/>
            <person name="Federspiel N.A."/>
            <person name="Kaul S."/>
            <person name="White O."/>
            <person name="Alonso J."/>
            <person name="Altafi H."/>
            <person name="Araujo R."/>
            <person name="Bowman C.L."/>
            <person name="Brooks S.Y."/>
            <person name="Buehler E."/>
            <person name="Chan A."/>
            <person name="Chao Q."/>
            <person name="Chen H."/>
            <person name="Cheuk R.F."/>
            <person name="Chin C.W."/>
            <person name="Chung M.K."/>
            <person name="Conn L."/>
            <person name="Conway A.B."/>
            <person name="Conway A.R."/>
            <person name="Creasy T.H."/>
            <person name="Dewar K."/>
            <person name="Dunn P."/>
            <person name="Etgu P."/>
            <person name="Feldblyum T.V."/>
            <person name="Feng J.-D."/>
            <person name="Fong B."/>
            <person name="Fujii C.Y."/>
            <person name="Gill J.E."/>
            <person name="Goldsmith A.D."/>
            <person name="Haas B."/>
            <person name="Hansen N.F."/>
            <person name="Hughes B."/>
            <person name="Huizar L."/>
            <person name="Hunter J.L."/>
            <person name="Jenkins J."/>
            <person name="Johnson-Hopson C."/>
            <person name="Khan S."/>
            <person name="Khaykin E."/>
            <person name="Kim C.J."/>
            <person name="Koo H.L."/>
            <person name="Kremenetskaia I."/>
            <person name="Kurtz D.B."/>
            <person name="Kwan A."/>
            <person name="Lam B."/>
            <person name="Langin-Hooper S."/>
            <person name="Lee A."/>
            <person name="Lee J.M."/>
            <person name="Lenz C.A."/>
            <person name="Li J.H."/>
            <person name="Li Y.-P."/>
            <person name="Lin X."/>
            <person name="Liu S.X."/>
            <person name="Liu Z.A."/>
            <person name="Luros J.S."/>
            <person name="Maiti R."/>
            <person name="Marziali A."/>
            <person name="Militscher J."/>
            <person name="Miranda M."/>
            <person name="Nguyen M."/>
            <person name="Nierman W.C."/>
            <person name="Osborne B.I."/>
            <person name="Pai G."/>
            <person name="Peterson J."/>
            <person name="Pham P.K."/>
            <person name="Rizzo M."/>
            <person name="Rooney T."/>
            <person name="Rowley D."/>
            <person name="Sakano H."/>
            <person name="Salzberg S.L."/>
            <person name="Schwartz J.R."/>
            <person name="Shinn P."/>
            <person name="Southwick A.M."/>
            <person name="Sun H."/>
            <person name="Tallon L.J."/>
            <person name="Tambunga G."/>
            <person name="Toriumi M.J."/>
            <person name="Town C.D."/>
            <person name="Utterback T."/>
            <person name="Van Aken S."/>
            <person name="Vaysberg M."/>
            <person name="Vysotskaia V.S."/>
            <person name="Walker M."/>
            <person name="Wu D."/>
            <person name="Yu G."/>
            <person name="Fraser C.M."/>
            <person name="Venter J.C."/>
            <person name="Davis R.W."/>
        </authorList>
    </citation>
    <scope>NUCLEOTIDE SEQUENCE [LARGE SCALE GENOMIC DNA]</scope>
    <source>
        <strain>cv. Columbia</strain>
    </source>
</reference>
<reference key="2">
    <citation type="journal article" date="2017" name="Plant J.">
        <title>Araport11: a complete reannotation of the Arabidopsis thaliana reference genome.</title>
        <authorList>
            <person name="Cheng C.Y."/>
            <person name="Krishnakumar V."/>
            <person name="Chan A.P."/>
            <person name="Thibaud-Nissen F."/>
            <person name="Schobel S."/>
            <person name="Town C.D."/>
        </authorList>
    </citation>
    <scope>GENOME REANNOTATION</scope>
    <source>
        <strain>cv. Columbia</strain>
    </source>
</reference>
<reference key="3">
    <citation type="journal article" date="2002" name="Science">
        <title>Functional annotation of a full-length Arabidopsis cDNA collection.</title>
        <authorList>
            <person name="Seki M."/>
            <person name="Narusaka M."/>
            <person name="Kamiya A."/>
            <person name="Ishida J."/>
            <person name="Satou M."/>
            <person name="Sakurai T."/>
            <person name="Nakajima M."/>
            <person name="Enju A."/>
            <person name="Akiyama K."/>
            <person name="Oono Y."/>
            <person name="Muramatsu M."/>
            <person name="Hayashizaki Y."/>
            <person name="Kawai J."/>
            <person name="Carninci P."/>
            <person name="Itoh M."/>
            <person name="Ishii Y."/>
            <person name="Arakawa T."/>
            <person name="Shibata K."/>
            <person name="Shinagawa A."/>
            <person name="Shinozaki K."/>
        </authorList>
    </citation>
    <scope>NUCLEOTIDE SEQUENCE [LARGE SCALE MRNA]</scope>
    <source>
        <strain>cv. Columbia</strain>
    </source>
</reference>
<reference key="4">
    <citation type="journal article" date="2003" name="Science">
        <title>Empirical analysis of transcriptional activity in the Arabidopsis genome.</title>
        <authorList>
            <person name="Yamada K."/>
            <person name="Lim J."/>
            <person name="Dale J.M."/>
            <person name="Chen H."/>
            <person name="Shinn P."/>
            <person name="Palm C.J."/>
            <person name="Southwick A.M."/>
            <person name="Wu H.C."/>
            <person name="Kim C.J."/>
            <person name="Nguyen M."/>
            <person name="Pham P.K."/>
            <person name="Cheuk R.F."/>
            <person name="Karlin-Newmann G."/>
            <person name="Liu S.X."/>
            <person name="Lam B."/>
            <person name="Sakano H."/>
            <person name="Wu T."/>
            <person name="Yu G."/>
            <person name="Miranda M."/>
            <person name="Quach H.L."/>
            <person name="Tripp M."/>
            <person name="Chang C.H."/>
            <person name="Lee J.M."/>
            <person name="Toriumi M.J."/>
            <person name="Chan M.M."/>
            <person name="Tang C.C."/>
            <person name="Onodera C.S."/>
            <person name="Deng J.M."/>
            <person name="Akiyama K."/>
            <person name="Ansari Y."/>
            <person name="Arakawa T."/>
            <person name="Banh J."/>
            <person name="Banno F."/>
            <person name="Bowser L."/>
            <person name="Brooks S.Y."/>
            <person name="Carninci P."/>
            <person name="Chao Q."/>
            <person name="Choy N."/>
            <person name="Enju A."/>
            <person name="Goldsmith A.D."/>
            <person name="Gurjal M."/>
            <person name="Hansen N.F."/>
            <person name="Hayashizaki Y."/>
            <person name="Johnson-Hopson C."/>
            <person name="Hsuan V.W."/>
            <person name="Iida K."/>
            <person name="Karnes M."/>
            <person name="Khan S."/>
            <person name="Koesema E."/>
            <person name="Ishida J."/>
            <person name="Jiang P.X."/>
            <person name="Jones T."/>
            <person name="Kawai J."/>
            <person name="Kamiya A."/>
            <person name="Meyers C."/>
            <person name="Nakajima M."/>
            <person name="Narusaka M."/>
            <person name="Seki M."/>
            <person name="Sakurai T."/>
            <person name="Satou M."/>
            <person name="Tamse R."/>
            <person name="Vaysberg M."/>
            <person name="Wallender E.K."/>
            <person name="Wong C."/>
            <person name="Yamamura Y."/>
            <person name="Yuan S."/>
            <person name="Shinozaki K."/>
            <person name="Davis R.W."/>
            <person name="Theologis A."/>
            <person name="Ecker J.R."/>
        </authorList>
    </citation>
    <scope>NUCLEOTIDE SEQUENCE [LARGE SCALE MRNA]</scope>
    <source>
        <strain>cv. Columbia</strain>
    </source>
</reference>
<comment type="subcellular location">
    <subcellularLocation>
        <location evidence="2">Membrane</location>
        <topology evidence="2">Multi-pass membrane protein</topology>
    </subcellularLocation>
</comment>
<comment type="alternative products">
    <event type="alternative splicing"/>
    <isoform>
        <id>Q8GWT5-1</id>
        <name>1</name>
        <sequence type="displayed"/>
    </isoform>
    <text>A number of isoforms are produced. According to EST sequences.</text>
</comment>
<comment type="similarity">
    <text evidence="2">Belongs to the cornichon family.</text>
</comment>
<comment type="sequence caution" evidence="2">
    <conflict type="erroneous gene model prediction">
        <sequence resource="EMBL-CDS" id="AAF75818"/>
    </conflict>
</comment>
<name>CNIH3_ARATH</name>
<organism>
    <name type="scientific">Arabidopsis thaliana</name>
    <name type="common">Mouse-ear cress</name>
    <dbReference type="NCBI Taxonomy" id="3702"/>
    <lineage>
        <taxon>Eukaryota</taxon>
        <taxon>Viridiplantae</taxon>
        <taxon>Streptophyta</taxon>
        <taxon>Embryophyta</taxon>
        <taxon>Tracheophyta</taxon>
        <taxon>Spermatophyta</taxon>
        <taxon>Magnoliopsida</taxon>
        <taxon>eudicotyledons</taxon>
        <taxon>Gunneridae</taxon>
        <taxon>Pentapetalae</taxon>
        <taxon>rosids</taxon>
        <taxon>malvids</taxon>
        <taxon>Brassicales</taxon>
        <taxon>Brassicaceae</taxon>
        <taxon>Camelineae</taxon>
        <taxon>Arabidopsis</taxon>
    </lineage>
</organism>
<dbReference type="EMBL" id="AC011000">
    <property type="protein sequence ID" value="AAF75818.1"/>
    <property type="status" value="ALT_SEQ"/>
    <property type="molecule type" value="Genomic_DNA"/>
</dbReference>
<dbReference type="EMBL" id="CP002684">
    <property type="protein sequence ID" value="AEE34016.1"/>
    <property type="molecule type" value="Genomic_DNA"/>
</dbReference>
<dbReference type="EMBL" id="AK118647">
    <property type="protein sequence ID" value="BAC43243.1"/>
    <property type="molecule type" value="mRNA"/>
</dbReference>
<dbReference type="EMBL" id="BT004730">
    <property type="protein sequence ID" value="AAO42976.1"/>
    <property type="molecule type" value="mRNA"/>
</dbReference>
<dbReference type="PIR" id="D96653">
    <property type="entry name" value="D96653"/>
</dbReference>
<dbReference type="RefSeq" id="NP_176476.1">
    <molecule id="Q8GWT5-1"/>
    <property type="nucleotide sequence ID" value="NM_104966.4"/>
</dbReference>
<dbReference type="SMR" id="Q8GWT5"/>
<dbReference type="BioGRID" id="27810">
    <property type="interactions" value="4"/>
</dbReference>
<dbReference type="FunCoup" id="Q8GWT5">
    <property type="interactions" value="3483"/>
</dbReference>
<dbReference type="IntAct" id="Q8GWT5">
    <property type="interactions" value="7"/>
</dbReference>
<dbReference type="STRING" id="3702.Q8GWT5"/>
<dbReference type="PaxDb" id="3702-AT1G62880.1"/>
<dbReference type="EnsemblPlants" id="AT1G62880.1">
    <molecule id="Q8GWT5-1"/>
    <property type="protein sequence ID" value="AT1G62880.1"/>
    <property type="gene ID" value="AT1G62880"/>
</dbReference>
<dbReference type="GeneID" id="842589"/>
<dbReference type="Gramene" id="AT1G62880.1">
    <molecule id="Q8GWT5-1"/>
    <property type="protein sequence ID" value="AT1G62880.1"/>
    <property type="gene ID" value="AT1G62880"/>
</dbReference>
<dbReference type="KEGG" id="ath:AT1G62880"/>
<dbReference type="Araport" id="AT1G62880"/>
<dbReference type="TAIR" id="AT1G62880"/>
<dbReference type="eggNOG" id="KOG2729">
    <property type="taxonomic scope" value="Eukaryota"/>
</dbReference>
<dbReference type="HOGENOM" id="CLU_112942_3_1_1"/>
<dbReference type="InParanoid" id="Q8GWT5"/>
<dbReference type="OMA" id="HLVMGHW"/>
<dbReference type="OrthoDB" id="434393at2759"/>
<dbReference type="PhylomeDB" id="Q8GWT5"/>
<dbReference type="PRO" id="PR:Q8GWT5"/>
<dbReference type="Proteomes" id="UP000006548">
    <property type="component" value="Chromosome 1"/>
</dbReference>
<dbReference type="ExpressionAtlas" id="Q8GWT5">
    <property type="expression patterns" value="baseline and differential"/>
</dbReference>
<dbReference type="GO" id="GO:0016020">
    <property type="term" value="C:membrane"/>
    <property type="evidence" value="ECO:0007669"/>
    <property type="project" value="UniProtKB-SubCell"/>
</dbReference>
<dbReference type="GO" id="GO:0016192">
    <property type="term" value="P:vesicle-mediated transport"/>
    <property type="evidence" value="ECO:0007669"/>
    <property type="project" value="InterPro"/>
</dbReference>
<dbReference type="InterPro" id="IPR003377">
    <property type="entry name" value="Cornichon"/>
</dbReference>
<dbReference type="PANTHER" id="PTHR12290">
    <property type="entry name" value="CORNICHON-RELATED"/>
    <property type="match status" value="1"/>
</dbReference>
<dbReference type="Pfam" id="PF03311">
    <property type="entry name" value="Cornichon"/>
    <property type="match status" value="1"/>
</dbReference>
<dbReference type="SMART" id="SM01398">
    <property type="entry name" value="Cornichon"/>
    <property type="match status" value="1"/>
</dbReference>
<feature type="chain" id="PRO_0000398828" description="Protein cornichon homolog 3">
    <location>
        <begin position="1"/>
        <end position="137"/>
    </location>
</feature>
<feature type="transmembrane region" description="Helical" evidence="1">
    <location>
        <begin position="8"/>
        <end position="28"/>
    </location>
</feature>
<feature type="transmembrane region" description="Helical" evidence="1">
    <location>
        <begin position="54"/>
        <end position="74"/>
    </location>
</feature>
<feature type="transmembrane region" description="Helical" evidence="1">
    <location>
        <begin position="113"/>
        <end position="133"/>
    </location>
</feature>
<accession>Q8GWT5</accession>
<accession>Q9LQ18</accession>
<proteinExistence type="evidence at transcript level"/>
<sequence>MGEVWTWIISFLILITLLGLIVYQLISLADLEFDYINPYDSASRINFVVLPESILQGFLCVFYLVTGHWFMALLCVPYLYYNFHLYSRKQHLIDVTEIFNLLDWEKKKRLFKLAYIILTLFLTIFWLIYSTLDDYED</sequence>
<gene>
    <name type="ordered locus">At1g62880</name>
    <name type="ORF">F16P17.3</name>
</gene>